<feature type="chain" id="PRO_0000048826" description="BarH-like 1 homeobox protein">
    <location>
        <begin position="1"/>
        <end position="327"/>
    </location>
</feature>
<feature type="DNA-binding region" description="Homeobox" evidence="1">
    <location>
        <begin position="178"/>
        <end position="237"/>
    </location>
</feature>
<feature type="region of interest" description="Disordered" evidence="2">
    <location>
        <begin position="1"/>
        <end position="90"/>
    </location>
</feature>
<feature type="region of interest" description="Disordered" evidence="2">
    <location>
        <begin position="112"/>
        <end position="184"/>
    </location>
</feature>
<feature type="region of interest" description="Disordered" evidence="2">
    <location>
        <begin position="305"/>
        <end position="327"/>
    </location>
</feature>
<feature type="compositionally biased region" description="Low complexity" evidence="2">
    <location>
        <begin position="33"/>
        <end position="54"/>
    </location>
</feature>
<feature type="compositionally biased region" description="Polar residues" evidence="2">
    <location>
        <begin position="79"/>
        <end position="90"/>
    </location>
</feature>
<feature type="compositionally biased region" description="Basic and acidic residues" evidence="2">
    <location>
        <begin position="133"/>
        <end position="143"/>
    </location>
</feature>
<feature type="compositionally biased region" description="Basic and acidic residues" evidence="2">
    <location>
        <begin position="152"/>
        <end position="166"/>
    </location>
</feature>
<feature type="compositionally biased region" description="Low complexity" evidence="2">
    <location>
        <begin position="316"/>
        <end position="327"/>
    </location>
</feature>
<organism>
    <name type="scientific">Homo sapiens</name>
    <name type="common">Human</name>
    <dbReference type="NCBI Taxonomy" id="9606"/>
    <lineage>
        <taxon>Eukaryota</taxon>
        <taxon>Metazoa</taxon>
        <taxon>Chordata</taxon>
        <taxon>Craniata</taxon>
        <taxon>Vertebrata</taxon>
        <taxon>Euteleostomi</taxon>
        <taxon>Mammalia</taxon>
        <taxon>Eutheria</taxon>
        <taxon>Euarchontoglires</taxon>
        <taxon>Primates</taxon>
        <taxon>Haplorrhini</taxon>
        <taxon>Catarrhini</taxon>
        <taxon>Hominidae</taxon>
        <taxon>Homo</taxon>
    </lineage>
</organism>
<evidence type="ECO:0000255" key="1">
    <source>
        <dbReference type="PROSITE-ProRule" id="PRU00108"/>
    </source>
</evidence>
<evidence type="ECO:0000256" key="2">
    <source>
        <dbReference type="SAM" id="MobiDB-lite"/>
    </source>
</evidence>
<evidence type="ECO:0000305" key="3"/>
<name>BARH1_HUMAN</name>
<proteinExistence type="evidence at protein level"/>
<gene>
    <name type="primary">BARHL1</name>
    <name type="ORF">FKSG31</name>
</gene>
<sequence length="327" mass="35074">MEGSNGFGIDSILSHRAGSPALPKGDPLLGDCRSPLELSPRSESSSDCSSPASPGRDCLETGTPRPGGASGPGLDSHLQPGQLSAPAQSRTVTSSFLIRDILADCKPLAACAPYSSSGQPAAPEPGGRLAAKAAEDFRDKLDKSGSNASSDSEYKVKEEGDREISSSRDSPPVRLKKPRKARTAFTDHQLAQLERSFERQKYLSVQDRMELAASLNLTDTQVKTWYQNRRTKWKRQTAVGLELLAEAGNYSALQRMFPSPYFYPQSLVSNLDPGAALYLYRGPSAPPPALQRPLVPRILIHGLQGASEPPPPLPPLAGVLPRAAQPR</sequence>
<accession>Q9BZE3</accession>
<accession>Q5T6V2</accession>
<accession>Q9NY88</accession>
<keyword id="KW-0238">DNA-binding</keyword>
<keyword id="KW-0371">Homeobox</keyword>
<keyword id="KW-0539">Nucleus</keyword>
<keyword id="KW-1267">Proteomics identification</keyword>
<keyword id="KW-1185">Reference proteome</keyword>
<keyword id="KW-0804">Transcription</keyword>
<keyword id="KW-0805">Transcription regulation</keyword>
<comment type="subcellular location">
    <subcellularLocation>
        <location evidence="3">Nucleus</location>
    </subcellularLocation>
</comment>
<comment type="similarity">
    <text evidence="3">Belongs to the BAR homeobox family.</text>
</comment>
<dbReference type="EMBL" id="AF325688">
    <property type="protein sequence ID" value="AAG50279.1"/>
    <property type="molecule type" value="mRNA"/>
</dbReference>
<dbReference type="EMBL" id="AF321618">
    <property type="protein sequence ID" value="AAK52674.1"/>
    <property type="molecule type" value="mRNA"/>
</dbReference>
<dbReference type="EMBL" id="AK054797">
    <property type="protein sequence ID" value="BAB70807.1"/>
    <property type="molecule type" value="mRNA"/>
</dbReference>
<dbReference type="EMBL" id="AL354735">
    <property type="status" value="NOT_ANNOTATED_CDS"/>
    <property type="molecule type" value="Genomic_DNA"/>
</dbReference>
<dbReference type="EMBL" id="CH471090">
    <property type="protein sequence ID" value="EAW88005.1"/>
    <property type="molecule type" value="Genomic_DNA"/>
</dbReference>
<dbReference type="EMBL" id="BC136956">
    <property type="protein sequence ID" value="AAI36957.1"/>
    <property type="molecule type" value="mRNA"/>
</dbReference>
<dbReference type="EMBL" id="BC136969">
    <property type="protein sequence ID" value="AAI36970.1"/>
    <property type="molecule type" value="mRNA"/>
</dbReference>
<dbReference type="EMBL" id="AJ237816">
    <property type="protein sequence ID" value="CAB92439.1"/>
    <property type="molecule type" value="Genomic_DNA"/>
</dbReference>
<dbReference type="CCDS" id="CCDS6950.1"/>
<dbReference type="RefSeq" id="NP_064448.1">
    <property type="nucleotide sequence ID" value="NM_020064.4"/>
</dbReference>
<dbReference type="SMR" id="Q9BZE3"/>
<dbReference type="BioGRID" id="121195">
    <property type="interactions" value="3"/>
</dbReference>
<dbReference type="FunCoup" id="Q9BZE3">
    <property type="interactions" value="1293"/>
</dbReference>
<dbReference type="IntAct" id="Q9BZE3">
    <property type="interactions" value="2"/>
</dbReference>
<dbReference type="STRING" id="9606.ENSP00000263610"/>
<dbReference type="GlyGen" id="Q9BZE3">
    <property type="glycosylation" value="1 site, 1 O-linked glycan (1 site)"/>
</dbReference>
<dbReference type="iPTMnet" id="Q9BZE3"/>
<dbReference type="PhosphoSitePlus" id="Q9BZE3"/>
<dbReference type="BioMuta" id="BARHL1"/>
<dbReference type="DMDM" id="29336920"/>
<dbReference type="MassIVE" id="Q9BZE3"/>
<dbReference type="PaxDb" id="9606-ENSP00000263610"/>
<dbReference type="PeptideAtlas" id="Q9BZE3"/>
<dbReference type="Antibodypedia" id="1441">
    <property type="antibodies" value="137 antibodies from 15 providers"/>
</dbReference>
<dbReference type="DNASU" id="56751"/>
<dbReference type="Ensembl" id="ENST00000263610.7">
    <property type="protein sequence ID" value="ENSP00000263610.2"/>
    <property type="gene ID" value="ENSG00000125492.11"/>
</dbReference>
<dbReference type="GeneID" id="56751"/>
<dbReference type="KEGG" id="hsa:56751"/>
<dbReference type="MANE-Select" id="ENST00000263610.7">
    <property type="protein sequence ID" value="ENSP00000263610.2"/>
    <property type="RefSeq nucleotide sequence ID" value="NM_020064.4"/>
    <property type="RefSeq protein sequence ID" value="NP_064448.1"/>
</dbReference>
<dbReference type="UCSC" id="uc004cbp.2">
    <property type="organism name" value="human"/>
</dbReference>
<dbReference type="AGR" id="HGNC:953"/>
<dbReference type="CTD" id="56751"/>
<dbReference type="DisGeNET" id="56751"/>
<dbReference type="GeneCards" id="BARHL1"/>
<dbReference type="HGNC" id="HGNC:953">
    <property type="gene designation" value="BARHL1"/>
</dbReference>
<dbReference type="HPA" id="ENSG00000125492">
    <property type="expression patterns" value="Tissue enriched (brain)"/>
</dbReference>
<dbReference type="MIM" id="605211">
    <property type="type" value="gene"/>
</dbReference>
<dbReference type="neXtProt" id="NX_Q9BZE3"/>
<dbReference type="OpenTargets" id="ENSG00000125492"/>
<dbReference type="PharmGKB" id="PA25257"/>
<dbReference type="VEuPathDB" id="HostDB:ENSG00000125492"/>
<dbReference type="eggNOG" id="KOG0488">
    <property type="taxonomic scope" value="Eukaryota"/>
</dbReference>
<dbReference type="GeneTree" id="ENSGT00940000160428"/>
<dbReference type="HOGENOM" id="CLU_074592_0_0_1"/>
<dbReference type="InParanoid" id="Q9BZE3"/>
<dbReference type="OMA" id="LIGDCRS"/>
<dbReference type="OrthoDB" id="6159439at2759"/>
<dbReference type="PAN-GO" id="Q9BZE3">
    <property type="GO annotations" value="4 GO annotations based on evolutionary models"/>
</dbReference>
<dbReference type="PhylomeDB" id="Q9BZE3"/>
<dbReference type="TreeFam" id="TF316128"/>
<dbReference type="PathwayCommons" id="Q9BZE3"/>
<dbReference type="SignaLink" id="Q9BZE3"/>
<dbReference type="BioGRID-ORCS" id="56751">
    <property type="hits" value="11 hits in 1162 CRISPR screens"/>
</dbReference>
<dbReference type="GenomeRNAi" id="56751"/>
<dbReference type="Pharos" id="Q9BZE3">
    <property type="development level" value="Tbio"/>
</dbReference>
<dbReference type="PRO" id="PR:Q9BZE3"/>
<dbReference type="Proteomes" id="UP000005640">
    <property type="component" value="Chromosome 9"/>
</dbReference>
<dbReference type="RNAct" id="Q9BZE3">
    <property type="molecule type" value="protein"/>
</dbReference>
<dbReference type="Bgee" id="ENSG00000125492">
    <property type="expression patterns" value="Expressed in male germ line stem cell (sensu Vertebrata) in testis and 22 other cell types or tissues"/>
</dbReference>
<dbReference type="GO" id="GO:0000785">
    <property type="term" value="C:chromatin"/>
    <property type="evidence" value="ECO:0000247"/>
    <property type="project" value="NTNU_SB"/>
</dbReference>
<dbReference type="GO" id="GO:0005634">
    <property type="term" value="C:nucleus"/>
    <property type="evidence" value="ECO:0000318"/>
    <property type="project" value="GO_Central"/>
</dbReference>
<dbReference type="GO" id="GO:0001228">
    <property type="term" value="F:DNA-binding transcription activator activity, RNA polymerase II-specific"/>
    <property type="evidence" value="ECO:0007669"/>
    <property type="project" value="Ensembl"/>
</dbReference>
<dbReference type="GO" id="GO:0000981">
    <property type="term" value="F:DNA-binding transcription factor activity, RNA polymerase II-specific"/>
    <property type="evidence" value="ECO:0000247"/>
    <property type="project" value="NTNU_SB"/>
</dbReference>
<dbReference type="GO" id="GO:0000977">
    <property type="term" value="F:RNA polymerase II transcription regulatory region sequence-specific DNA binding"/>
    <property type="evidence" value="ECO:0000318"/>
    <property type="project" value="GO_Central"/>
</dbReference>
<dbReference type="GO" id="GO:1990837">
    <property type="term" value="F:sequence-specific double-stranded DNA binding"/>
    <property type="evidence" value="ECO:0000314"/>
    <property type="project" value="ARUK-UCL"/>
</dbReference>
<dbReference type="GO" id="GO:0030901">
    <property type="term" value="P:midbrain development"/>
    <property type="evidence" value="ECO:0007669"/>
    <property type="project" value="Ensembl"/>
</dbReference>
<dbReference type="GO" id="GO:1905586">
    <property type="term" value="P:negative regulation of outer hair cell apoptotic process"/>
    <property type="evidence" value="ECO:0007669"/>
    <property type="project" value="Ensembl"/>
</dbReference>
<dbReference type="GO" id="GO:0001764">
    <property type="term" value="P:neuron migration"/>
    <property type="evidence" value="ECO:0007669"/>
    <property type="project" value="Ensembl"/>
</dbReference>
<dbReference type="GO" id="GO:1905584">
    <property type="term" value="P:outer hair cell apoptotic process"/>
    <property type="evidence" value="ECO:0007669"/>
    <property type="project" value="Ensembl"/>
</dbReference>
<dbReference type="GO" id="GO:0006357">
    <property type="term" value="P:regulation of transcription by RNA polymerase II"/>
    <property type="evidence" value="ECO:0000318"/>
    <property type="project" value="GO_Central"/>
</dbReference>
<dbReference type="GO" id="GO:0007605">
    <property type="term" value="P:sensory perception of sound"/>
    <property type="evidence" value="ECO:0007669"/>
    <property type="project" value="Ensembl"/>
</dbReference>
<dbReference type="CDD" id="cd00086">
    <property type="entry name" value="homeodomain"/>
    <property type="match status" value="1"/>
</dbReference>
<dbReference type="FunFam" id="1.10.10.60:FF:000097">
    <property type="entry name" value="barH-like 2 homeobox protein-like"/>
    <property type="match status" value="1"/>
</dbReference>
<dbReference type="Gene3D" id="1.10.10.60">
    <property type="entry name" value="Homeodomain-like"/>
    <property type="match status" value="1"/>
</dbReference>
<dbReference type="InterPro" id="IPR001356">
    <property type="entry name" value="HD"/>
</dbReference>
<dbReference type="InterPro" id="IPR020479">
    <property type="entry name" value="HD_metazoa"/>
</dbReference>
<dbReference type="InterPro" id="IPR017970">
    <property type="entry name" value="Homeobox_CS"/>
</dbReference>
<dbReference type="InterPro" id="IPR050848">
    <property type="entry name" value="Homeobox_TF"/>
</dbReference>
<dbReference type="InterPro" id="IPR009057">
    <property type="entry name" value="Homeodomain-like_sf"/>
</dbReference>
<dbReference type="PANTHER" id="PTHR24333">
    <property type="entry name" value="HOMEO BOX HB9 LIKE A-RELATED"/>
    <property type="match status" value="1"/>
</dbReference>
<dbReference type="PANTHER" id="PTHR24333:SF5">
    <property type="entry name" value="VENT HOMEOBOX"/>
    <property type="match status" value="1"/>
</dbReference>
<dbReference type="Pfam" id="PF00046">
    <property type="entry name" value="Homeodomain"/>
    <property type="match status" value="1"/>
</dbReference>
<dbReference type="PRINTS" id="PR00024">
    <property type="entry name" value="HOMEOBOX"/>
</dbReference>
<dbReference type="SMART" id="SM00389">
    <property type="entry name" value="HOX"/>
    <property type="match status" value="1"/>
</dbReference>
<dbReference type="SUPFAM" id="SSF46689">
    <property type="entry name" value="Homeodomain-like"/>
    <property type="match status" value="1"/>
</dbReference>
<dbReference type="PROSITE" id="PS00027">
    <property type="entry name" value="HOMEOBOX_1"/>
    <property type="match status" value="1"/>
</dbReference>
<dbReference type="PROSITE" id="PS50071">
    <property type="entry name" value="HOMEOBOX_2"/>
    <property type="match status" value="1"/>
</dbReference>
<protein>
    <recommendedName>
        <fullName>BarH-like 1 homeobox protein</fullName>
    </recommendedName>
</protein>
<reference key="1">
    <citation type="submission" date="2000-12" db="EMBL/GenBank/DDBJ databases">
        <title>Cloning and characterization of FKSG31, a novel gene encoding human BarH-like 1 protein.</title>
        <authorList>
            <person name="Wang Y.-G."/>
            <person name="Gong L."/>
        </authorList>
    </citation>
    <scope>NUCLEOTIDE SEQUENCE [MRNA]</scope>
</reference>
<reference key="2">
    <citation type="journal article" date="2004" name="Am. J. Med. Genet. A">
        <title>Mutational analysis of BARHL1 and BARX1 in three new patients with Joubert syndrome.</title>
        <authorList>
            <person name="Gould D.B."/>
            <person name="Walter M.A."/>
        </authorList>
    </citation>
    <scope>NUCLEOTIDE SEQUENCE [MRNA]</scope>
</reference>
<reference key="3">
    <citation type="journal article" date="2004" name="Nat. Genet.">
        <title>Complete sequencing and characterization of 21,243 full-length human cDNAs.</title>
        <authorList>
            <person name="Ota T."/>
            <person name="Suzuki Y."/>
            <person name="Nishikawa T."/>
            <person name="Otsuki T."/>
            <person name="Sugiyama T."/>
            <person name="Irie R."/>
            <person name="Wakamatsu A."/>
            <person name="Hayashi K."/>
            <person name="Sato H."/>
            <person name="Nagai K."/>
            <person name="Kimura K."/>
            <person name="Makita H."/>
            <person name="Sekine M."/>
            <person name="Obayashi M."/>
            <person name="Nishi T."/>
            <person name="Shibahara T."/>
            <person name="Tanaka T."/>
            <person name="Ishii S."/>
            <person name="Yamamoto J."/>
            <person name="Saito K."/>
            <person name="Kawai Y."/>
            <person name="Isono Y."/>
            <person name="Nakamura Y."/>
            <person name="Nagahari K."/>
            <person name="Murakami K."/>
            <person name="Yasuda T."/>
            <person name="Iwayanagi T."/>
            <person name="Wagatsuma M."/>
            <person name="Shiratori A."/>
            <person name="Sudo H."/>
            <person name="Hosoiri T."/>
            <person name="Kaku Y."/>
            <person name="Kodaira H."/>
            <person name="Kondo H."/>
            <person name="Sugawara M."/>
            <person name="Takahashi M."/>
            <person name="Kanda K."/>
            <person name="Yokoi T."/>
            <person name="Furuya T."/>
            <person name="Kikkawa E."/>
            <person name="Omura Y."/>
            <person name="Abe K."/>
            <person name="Kamihara K."/>
            <person name="Katsuta N."/>
            <person name="Sato K."/>
            <person name="Tanikawa M."/>
            <person name="Yamazaki M."/>
            <person name="Ninomiya K."/>
            <person name="Ishibashi T."/>
            <person name="Yamashita H."/>
            <person name="Murakawa K."/>
            <person name="Fujimori K."/>
            <person name="Tanai H."/>
            <person name="Kimata M."/>
            <person name="Watanabe M."/>
            <person name="Hiraoka S."/>
            <person name="Chiba Y."/>
            <person name="Ishida S."/>
            <person name="Ono Y."/>
            <person name="Takiguchi S."/>
            <person name="Watanabe S."/>
            <person name="Yosida M."/>
            <person name="Hotuta T."/>
            <person name="Kusano J."/>
            <person name="Kanehori K."/>
            <person name="Takahashi-Fujii A."/>
            <person name="Hara H."/>
            <person name="Tanase T.-O."/>
            <person name="Nomura Y."/>
            <person name="Togiya S."/>
            <person name="Komai F."/>
            <person name="Hara R."/>
            <person name="Takeuchi K."/>
            <person name="Arita M."/>
            <person name="Imose N."/>
            <person name="Musashino K."/>
            <person name="Yuuki H."/>
            <person name="Oshima A."/>
            <person name="Sasaki N."/>
            <person name="Aotsuka S."/>
            <person name="Yoshikawa Y."/>
            <person name="Matsunawa H."/>
            <person name="Ichihara T."/>
            <person name="Shiohata N."/>
            <person name="Sano S."/>
            <person name="Moriya S."/>
            <person name="Momiyama H."/>
            <person name="Satoh N."/>
            <person name="Takami S."/>
            <person name="Terashima Y."/>
            <person name="Suzuki O."/>
            <person name="Nakagawa S."/>
            <person name="Senoh A."/>
            <person name="Mizoguchi H."/>
            <person name="Goto Y."/>
            <person name="Shimizu F."/>
            <person name="Wakebe H."/>
            <person name="Hishigaki H."/>
            <person name="Watanabe T."/>
            <person name="Sugiyama A."/>
            <person name="Takemoto M."/>
            <person name="Kawakami B."/>
            <person name="Yamazaki M."/>
            <person name="Watanabe K."/>
            <person name="Kumagai A."/>
            <person name="Itakura S."/>
            <person name="Fukuzumi Y."/>
            <person name="Fujimori Y."/>
            <person name="Komiyama M."/>
            <person name="Tashiro H."/>
            <person name="Tanigami A."/>
            <person name="Fujiwara T."/>
            <person name="Ono T."/>
            <person name="Yamada K."/>
            <person name="Fujii Y."/>
            <person name="Ozaki K."/>
            <person name="Hirao M."/>
            <person name="Ohmori Y."/>
            <person name="Kawabata A."/>
            <person name="Hikiji T."/>
            <person name="Kobatake N."/>
            <person name="Inagaki H."/>
            <person name="Ikema Y."/>
            <person name="Okamoto S."/>
            <person name="Okitani R."/>
            <person name="Kawakami T."/>
            <person name="Noguchi S."/>
            <person name="Itoh T."/>
            <person name="Shigeta K."/>
            <person name="Senba T."/>
            <person name="Matsumura K."/>
            <person name="Nakajima Y."/>
            <person name="Mizuno T."/>
            <person name="Morinaga M."/>
            <person name="Sasaki M."/>
            <person name="Togashi T."/>
            <person name="Oyama M."/>
            <person name="Hata H."/>
            <person name="Watanabe M."/>
            <person name="Komatsu T."/>
            <person name="Mizushima-Sugano J."/>
            <person name="Satoh T."/>
            <person name="Shirai Y."/>
            <person name="Takahashi Y."/>
            <person name="Nakagawa K."/>
            <person name="Okumura K."/>
            <person name="Nagase T."/>
            <person name="Nomura N."/>
            <person name="Kikuchi H."/>
            <person name="Masuho Y."/>
            <person name="Yamashita R."/>
            <person name="Nakai K."/>
            <person name="Yada T."/>
            <person name="Nakamura Y."/>
            <person name="Ohara O."/>
            <person name="Isogai T."/>
            <person name="Sugano S."/>
        </authorList>
    </citation>
    <scope>NUCLEOTIDE SEQUENCE [LARGE SCALE MRNA]</scope>
    <source>
        <tissue>Cerebellum</tissue>
    </source>
</reference>
<reference key="4">
    <citation type="journal article" date="2004" name="Nature">
        <title>DNA sequence and analysis of human chromosome 9.</title>
        <authorList>
            <person name="Humphray S.J."/>
            <person name="Oliver K."/>
            <person name="Hunt A.R."/>
            <person name="Plumb R.W."/>
            <person name="Loveland J.E."/>
            <person name="Howe K.L."/>
            <person name="Andrews T.D."/>
            <person name="Searle S."/>
            <person name="Hunt S.E."/>
            <person name="Scott C.E."/>
            <person name="Jones M.C."/>
            <person name="Ainscough R."/>
            <person name="Almeida J.P."/>
            <person name="Ambrose K.D."/>
            <person name="Ashwell R.I.S."/>
            <person name="Babbage A.K."/>
            <person name="Babbage S."/>
            <person name="Bagguley C.L."/>
            <person name="Bailey J."/>
            <person name="Banerjee R."/>
            <person name="Barker D.J."/>
            <person name="Barlow K.F."/>
            <person name="Bates K."/>
            <person name="Beasley H."/>
            <person name="Beasley O."/>
            <person name="Bird C.P."/>
            <person name="Bray-Allen S."/>
            <person name="Brown A.J."/>
            <person name="Brown J.Y."/>
            <person name="Burford D."/>
            <person name="Burrill W."/>
            <person name="Burton J."/>
            <person name="Carder C."/>
            <person name="Carter N.P."/>
            <person name="Chapman J.C."/>
            <person name="Chen Y."/>
            <person name="Clarke G."/>
            <person name="Clark S.Y."/>
            <person name="Clee C.M."/>
            <person name="Clegg S."/>
            <person name="Collier R.E."/>
            <person name="Corby N."/>
            <person name="Crosier M."/>
            <person name="Cummings A.T."/>
            <person name="Davies J."/>
            <person name="Dhami P."/>
            <person name="Dunn M."/>
            <person name="Dutta I."/>
            <person name="Dyer L.W."/>
            <person name="Earthrowl M.E."/>
            <person name="Faulkner L."/>
            <person name="Fleming C.J."/>
            <person name="Frankish A."/>
            <person name="Frankland J.A."/>
            <person name="French L."/>
            <person name="Fricker D.G."/>
            <person name="Garner P."/>
            <person name="Garnett J."/>
            <person name="Ghori J."/>
            <person name="Gilbert J.G.R."/>
            <person name="Glison C."/>
            <person name="Grafham D.V."/>
            <person name="Gribble S."/>
            <person name="Griffiths C."/>
            <person name="Griffiths-Jones S."/>
            <person name="Grocock R."/>
            <person name="Guy J."/>
            <person name="Hall R.E."/>
            <person name="Hammond S."/>
            <person name="Harley J.L."/>
            <person name="Harrison E.S.I."/>
            <person name="Hart E.A."/>
            <person name="Heath P.D."/>
            <person name="Henderson C.D."/>
            <person name="Hopkins B.L."/>
            <person name="Howard P.J."/>
            <person name="Howden P.J."/>
            <person name="Huckle E."/>
            <person name="Johnson C."/>
            <person name="Johnson D."/>
            <person name="Joy A.A."/>
            <person name="Kay M."/>
            <person name="Keenan S."/>
            <person name="Kershaw J.K."/>
            <person name="Kimberley A.M."/>
            <person name="King A."/>
            <person name="Knights A."/>
            <person name="Laird G.K."/>
            <person name="Langford C."/>
            <person name="Lawlor S."/>
            <person name="Leongamornlert D.A."/>
            <person name="Leversha M."/>
            <person name="Lloyd C."/>
            <person name="Lloyd D.M."/>
            <person name="Lovell J."/>
            <person name="Martin S."/>
            <person name="Mashreghi-Mohammadi M."/>
            <person name="Matthews L."/>
            <person name="McLaren S."/>
            <person name="McLay K.E."/>
            <person name="McMurray A."/>
            <person name="Milne S."/>
            <person name="Nickerson T."/>
            <person name="Nisbett J."/>
            <person name="Nordsiek G."/>
            <person name="Pearce A.V."/>
            <person name="Peck A.I."/>
            <person name="Porter K.M."/>
            <person name="Pandian R."/>
            <person name="Pelan S."/>
            <person name="Phillimore B."/>
            <person name="Povey S."/>
            <person name="Ramsey Y."/>
            <person name="Rand V."/>
            <person name="Scharfe M."/>
            <person name="Sehra H.K."/>
            <person name="Shownkeen R."/>
            <person name="Sims S.K."/>
            <person name="Skuce C.D."/>
            <person name="Smith M."/>
            <person name="Steward C.A."/>
            <person name="Swarbreck D."/>
            <person name="Sycamore N."/>
            <person name="Tester J."/>
            <person name="Thorpe A."/>
            <person name="Tracey A."/>
            <person name="Tromans A."/>
            <person name="Thomas D.W."/>
            <person name="Wall M."/>
            <person name="Wallis J.M."/>
            <person name="West A.P."/>
            <person name="Whitehead S.L."/>
            <person name="Willey D.L."/>
            <person name="Williams S.A."/>
            <person name="Wilming L."/>
            <person name="Wray P.W."/>
            <person name="Young L."/>
            <person name="Ashurst J.L."/>
            <person name="Coulson A."/>
            <person name="Blocker H."/>
            <person name="Durbin R.M."/>
            <person name="Sulston J.E."/>
            <person name="Hubbard T."/>
            <person name="Jackson M.J."/>
            <person name="Bentley D.R."/>
            <person name="Beck S."/>
            <person name="Rogers J."/>
            <person name="Dunham I."/>
        </authorList>
    </citation>
    <scope>NUCLEOTIDE SEQUENCE [LARGE SCALE GENOMIC DNA]</scope>
</reference>
<reference key="5">
    <citation type="submission" date="2005-07" db="EMBL/GenBank/DDBJ databases">
        <authorList>
            <person name="Mural R.J."/>
            <person name="Istrail S."/>
            <person name="Sutton G."/>
            <person name="Florea L."/>
            <person name="Halpern A.L."/>
            <person name="Mobarry C.M."/>
            <person name="Lippert R."/>
            <person name="Walenz B."/>
            <person name="Shatkay H."/>
            <person name="Dew I."/>
            <person name="Miller J.R."/>
            <person name="Flanigan M.J."/>
            <person name="Edwards N.J."/>
            <person name="Bolanos R."/>
            <person name="Fasulo D."/>
            <person name="Halldorsson B.V."/>
            <person name="Hannenhalli S."/>
            <person name="Turner R."/>
            <person name="Yooseph S."/>
            <person name="Lu F."/>
            <person name="Nusskern D.R."/>
            <person name="Shue B.C."/>
            <person name="Zheng X.H."/>
            <person name="Zhong F."/>
            <person name="Delcher A.L."/>
            <person name="Huson D.H."/>
            <person name="Kravitz S.A."/>
            <person name="Mouchard L."/>
            <person name="Reinert K."/>
            <person name="Remington K.A."/>
            <person name="Clark A.G."/>
            <person name="Waterman M.S."/>
            <person name="Eichler E.E."/>
            <person name="Adams M.D."/>
            <person name="Hunkapiller M.W."/>
            <person name="Myers E.W."/>
            <person name="Venter J.C."/>
        </authorList>
    </citation>
    <scope>NUCLEOTIDE SEQUENCE [LARGE SCALE GENOMIC DNA]</scope>
</reference>
<reference key="6">
    <citation type="journal article" date="2004" name="Genome Res.">
        <title>The status, quality, and expansion of the NIH full-length cDNA project: the Mammalian Gene Collection (MGC).</title>
        <authorList>
            <consortium name="The MGC Project Team"/>
        </authorList>
    </citation>
    <scope>NUCLEOTIDE SEQUENCE [LARGE SCALE MRNA]</scope>
    <source>
        <tissue>Testis</tissue>
    </source>
</reference>
<reference key="7">
    <citation type="journal article" date="2000" name="Hum. Mol. Genet.">
        <title>Barhl1, a gene belonging to a new subfamily of mammalian homeobox genes, is expressed in migrating neurons of the CNS.</title>
        <authorList>
            <person name="Bulfone A."/>
            <person name="Menguzzato E."/>
            <person name="Broccoli V."/>
            <person name="Marchitiello A."/>
            <person name="Gattuso C."/>
            <person name="Mariani M."/>
            <person name="Consalez G.G."/>
            <person name="Martinez S."/>
            <person name="Ballabio A."/>
            <person name="Banfi S."/>
        </authorList>
    </citation>
    <scope>NUCLEOTIDE SEQUENCE [GENOMIC DNA] OF 157-327</scope>
</reference>